<organism>
    <name type="scientific">Streptococcus agalactiae serotype III (strain NEM316)</name>
    <dbReference type="NCBI Taxonomy" id="211110"/>
    <lineage>
        <taxon>Bacteria</taxon>
        <taxon>Bacillati</taxon>
        <taxon>Bacillota</taxon>
        <taxon>Bacilli</taxon>
        <taxon>Lactobacillales</taxon>
        <taxon>Streptococcaceae</taxon>
        <taxon>Streptococcus</taxon>
    </lineage>
</organism>
<accession>P67522</accession>
<accession>Q8DWP2</accession>
<accession>Q8E2J0</accession>
<keyword id="KW-0963">Cytoplasm</keyword>
<keyword id="KW-0489">Methyltransferase</keyword>
<keyword id="KW-0698">rRNA processing</keyword>
<keyword id="KW-0949">S-adenosyl-L-methionine</keyword>
<keyword id="KW-0808">Transferase</keyword>
<evidence type="ECO:0000255" key="1">
    <source>
        <dbReference type="HAMAP-Rule" id="MF_00658"/>
    </source>
</evidence>
<gene>
    <name evidence="1" type="primary">rlmH</name>
    <name type="ordered locus">gbs2132</name>
</gene>
<feature type="chain" id="PRO_0000198187" description="Ribosomal RNA large subunit methyltransferase H">
    <location>
        <begin position="1"/>
        <end position="159"/>
    </location>
</feature>
<feature type="binding site" evidence="1">
    <location>
        <position position="76"/>
    </location>
    <ligand>
        <name>S-adenosyl-L-methionine</name>
        <dbReference type="ChEBI" id="CHEBI:59789"/>
    </ligand>
</feature>
<feature type="binding site" evidence="1">
    <location>
        <position position="108"/>
    </location>
    <ligand>
        <name>S-adenosyl-L-methionine</name>
        <dbReference type="ChEBI" id="CHEBI:59789"/>
    </ligand>
</feature>
<feature type="binding site" evidence="1">
    <location>
        <begin position="127"/>
        <end position="132"/>
    </location>
    <ligand>
        <name>S-adenosyl-L-methionine</name>
        <dbReference type="ChEBI" id="CHEBI:59789"/>
    </ligand>
</feature>
<comment type="function">
    <text evidence="1">Specifically methylates the pseudouridine at position 1915 (m3Psi1915) in 23S rRNA.</text>
</comment>
<comment type="catalytic activity">
    <reaction evidence="1">
        <text>pseudouridine(1915) in 23S rRNA + S-adenosyl-L-methionine = N(3)-methylpseudouridine(1915) in 23S rRNA + S-adenosyl-L-homocysteine + H(+)</text>
        <dbReference type="Rhea" id="RHEA:42752"/>
        <dbReference type="Rhea" id="RHEA-COMP:10221"/>
        <dbReference type="Rhea" id="RHEA-COMP:10222"/>
        <dbReference type="ChEBI" id="CHEBI:15378"/>
        <dbReference type="ChEBI" id="CHEBI:57856"/>
        <dbReference type="ChEBI" id="CHEBI:59789"/>
        <dbReference type="ChEBI" id="CHEBI:65314"/>
        <dbReference type="ChEBI" id="CHEBI:74486"/>
        <dbReference type="EC" id="2.1.1.177"/>
    </reaction>
</comment>
<comment type="subunit">
    <text evidence="1">Homodimer.</text>
</comment>
<comment type="subcellular location">
    <subcellularLocation>
        <location evidence="1">Cytoplasm</location>
    </subcellularLocation>
</comment>
<comment type="similarity">
    <text evidence="1">Belongs to the RNA methyltransferase RlmH family.</text>
</comment>
<proteinExistence type="inferred from homology"/>
<protein>
    <recommendedName>
        <fullName evidence="1">Ribosomal RNA large subunit methyltransferase H</fullName>
        <ecNumber evidence="1">2.1.1.177</ecNumber>
    </recommendedName>
    <alternativeName>
        <fullName evidence="1">23S rRNA (pseudouridine1915-N3)-methyltransferase</fullName>
    </alternativeName>
    <alternativeName>
        <fullName evidence="1">23S rRNA m3Psi1915 methyltransferase</fullName>
    </alternativeName>
    <alternativeName>
        <fullName evidence="1">rRNA (pseudouridine-N3-)-methyltransferase RlmH</fullName>
    </alternativeName>
</protein>
<dbReference type="EC" id="2.1.1.177" evidence="1"/>
<dbReference type="EMBL" id="AL766856">
    <property type="protein sequence ID" value="CAD47791.1"/>
    <property type="molecule type" value="Genomic_DNA"/>
</dbReference>
<dbReference type="RefSeq" id="WP_000768335.1">
    <property type="nucleotide sequence ID" value="NC_004368.1"/>
</dbReference>
<dbReference type="SMR" id="P67522"/>
<dbReference type="GeneID" id="66886911"/>
<dbReference type="KEGG" id="san:gbs2132"/>
<dbReference type="eggNOG" id="COG1576">
    <property type="taxonomic scope" value="Bacteria"/>
</dbReference>
<dbReference type="HOGENOM" id="CLU_100552_0_0_9"/>
<dbReference type="Proteomes" id="UP000000823">
    <property type="component" value="Chromosome"/>
</dbReference>
<dbReference type="GO" id="GO:0005737">
    <property type="term" value="C:cytoplasm"/>
    <property type="evidence" value="ECO:0007669"/>
    <property type="project" value="UniProtKB-SubCell"/>
</dbReference>
<dbReference type="GO" id="GO:0070038">
    <property type="term" value="F:rRNA (pseudouridine-N3-)-methyltransferase activity"/>
    <property type="evidence" value="ECO:0007669"/>
    <property type="project" value="UniProtKB-UniRule"/>
</dbReference>
<dbReference type="CDD" id="cd18081">
    <property type="entry name" value="RlmH-like"/>
    <property type="match status" value="1"/>
</dbReference>
<dbReference type="Gene3D" id="3.40.1280.10">
    <property type="match status" value="1"/>
</dbReference>
<dbReference type="HAMAP" id="MF_00658">
    <property type="entry name" value="23SrRNA_methyltr_H"/>
    <property type="match status" value="1"/>
</dbReference>
<dbReference type="InterPro" id="IPR029028">
    <property type="entry name" value="Alpha/beta_knot_MTases"/>
</dbReference>
<dbReference type="InterPro" id="IPR003742">
    <property type="entry name" value="RlmH-like"/>
</dbReference>
<dbReference type="InterPro" id="IPR029026">
    <property type="entry name" value="tRNA_m1G_MTases_N"/>
</dbReference>
<dbReference type="NCBIfam" id="NF000985">
    <property type="entry name" value="PRK00103.1-3"/>
    <property type="match status" value="1"/>
</dbReference>
<dbReference type="NCBIfam" id="TIGR00246">
    <property type="entry name" value="tRNA_RlmH_YbeA"/>
    <property type="match status" value="1"/>
</dbReference>
<dbReference type="PANTHER" id="PTHR33603">
    <property type="entry name" value="METHYLTRANSFERASE"/>
    <property type="match status" value="1"/>
</dbReference>
<dbReference type="PANTHER" id="PTHR33603:SF1">
    <property type="entry name" value="RIBOSOMAL RNA LARGE SUBUNIT METHYLTRANSFERASE H"/>
    <property type="match status" value="1"/>
</dbReference>
<dbReference type="Pfam" id="PF02590">
    <property type="entry name" value="SPOUT_MTase"/>
    <property type="match status" value="1"/>
</dbReference>
<dbReference type="PIRSF" id="PIRSF004505">
    <property type="entry name" value="MT_bac"/>
    <property type="match status" value="1"/>
</dbReference>
<dbReference type="SUPFAM" id="SSF75217">
    <property type="entry name" value="alpha/beta knot"/>
    <property type="match status" value="1"/>
</dbReference>
<name>RLMH_STRA3</name>
<reference key="1">
    <citation type="journal article" date="2002" name="Mol. Microbiol.">
        <title>Genome sequence of Streptococcus agalactiae, a pathogen causing invasive neonatal disease.</title>
        <authorList>
            <person name="Glaser P."/>
            <person name="Rusniok C."/>
            <person name="Buchrieser C."/>
            <person name="Chevalier F."/>
            <person name="Frangeul L."/>
            <person name="Msadek T."/>
            <person name="Zouine M."/>
            <person name="Couve E."/>
            <person name="Lalioui L."/>
            <person name="Poyart C."/>
            <person name="Trieu-Cuot P."/>
            <person name="Kunst F."/>
        </authorList>
    </citation>
    <scope>NUCLEOTIDE SEQUENCE [LARGE SCALE GENOMIC DNA]</scope>
    <source>
        <strain>NEM316</strain>
    </source>
</reference>
<sequence length="159" mass="18194">MKLKIITVGKLKEKYLKEGVAEYQKRLNRFSKIETIELADEKTPDKASISENQRILDIEGERILSKIGERDYVIGLAIEGKQLPSESFSHLIDQKMISGYSTITFVIGGSLGLSQKVKKRADYLMSFGLLTLPHQLMKLVLMEQIYRAFMIRQGTPYHK</sequence>